<evidence type="ECO:0000256" key="1">
    <source>
        <dbReference type="SAM" id="MobiDB-lite"/>
    </source>
</evidence>
<evidence type="ECO:0000269" key="2">
    <source>
    </source>
</evidence>
<evidence type="ECO:0000305" key="3"/>
<dbReference type="SMR" id="P83267"/>
<dbReference type="GO" id="GO:0000228">
    <property type="term" value="C:nuclear chromosome"/>
    <property type="evidence" value="ECO:0007669"/>
    <property type="project" value="InterPro"/>
</dbReference>
<dbReference type="GO" id="GO:0000786">
    <property type="term" value="C:nucleosome"/>
    <property type="evidence" value="ECO:0000304"/>
    <property type="project" value="UniProtKB"/>
</dbReference>
<dbReference type="GO" id="GO:0005634">
    <property type="term" value="C:nucleus"/>
    <property type="evidence" value="ECO:0000304"/>
    <property type="project" value="UniProtKB"/>
</dbReference>
<dbReference type="GO" id="GO:0003677">
    <property type="term" value="F:DNA binding"/>
    <property type="evidence" value="ECO:0000304"/>
    <property type="project" value="UniProtKB"/>
</dbReference>
<dbReference type="GO" id="GO:0007076">
    <property type="term" value="P:mitotic chromosome condensation"/>
    <property type="evidence" value="ECO:0000304"/>
    <property type="project" value="UniProtKB"/>
</dbReference>
<dbReference type="GO" id="GO:0006334">
    <property type="term" value="P:nucleosome assembly"/>
    <property type="evidence" value="ECO:0000304"/>
    <property type="project" value="UniProtKB"/>
</dbReference>
<dbReference type="GO" id="GO:0035092">
    <property type="term" value="P:sperm DNA condensation"/>
    <property type="evidence" value="ECO:0007669"/>
    <property type="project" value="InterPro"/>
</dbReference>
<dbReference type="GO" id="GO:0007283">
    <property type="term" value="P:spermatogenesis"/>
    <property type="evidence" value="ECO:0000304"/>
    <property type="project" value="UniProtKB"/>
</dbReference>
<dbReference type="InterPro" id="IPR012601">
    <property type="entry name" value="Spermatozal_protamine_typ"/>
</dbReference>
<dbReference type="Pfam" id="PF08188">
    <property type="entry name" value="Protamine_3"/>
    <property type="match status" value="1"/>
</dbReference>
<keyword id="KW-0158">Chromosome</keyword>
<keyword id="KW-0217">Developmental protein</keyword>
<keyword id="KW-0221">Differentiation</keyword>
<keyword id="KW-0903">Direct protein sequencing</keyword>
<keyword id="KW-0226">DNA condensation</keyword>
<keyword id="KW-0238">DNA-binding</keyword>
<keyword id="KW-0544">Nucleosome core</keyword>
<keyword id="KW-0539">Nucleus</keyword>
<keyword id="KW-0744">Spermatogenesis</keyword>
<sequence>ARRRHSMKKKRKSVRRRKTRKNQRKRKNSLGRSFKAHGFLKQPPRFRP</sequence>
<organism evidence="3">
    <name type="scientific">Hydrolagus colliei</name>
    <name type="common">Spotted ratfish</name>
    <name type="synonym">Chimaera colliei</name>
    <dbReference type="NCBI Taxonomy" id="7873"/>
    <lineage>
        <taxon>Eukaryota</taxon>
        <taxon>Metazoa</taxon>
        <taxon>Chordata</taxon>
        <taxon>Craniata</taxon>
        <taxon>Vertebrata</taxon>
        <taxon>Chondrichthyes</taxon>
        <taxon>Holocephali</taxon>
        <taxon>Chimaeriformes</taxon>
        <taxon>Chimaeridae</taxon>
        <taxon>Hydrolagus</taxon>
    </lineage>
</organism>
<reference evidence="3" key="1">
    <citation type="journal article" date="1996" name="J. Mol. Evol.">
        <title>The primary structure of a chondrichthyan protamine: a new apparent contradiction in protamine evolution.</title>
        <authorList>
            <person name="Saperas N."/>
            <person name="Buesa C."/>
            <person name="Abian J."/>
            <person name="Vandekerckhove J."/>
            <person name="Kasinsky H.E."/>
            <person name="Chiva M."/>
        </authorList>
    </citation>
    <scope>PROTEIN SEQUENCE</scope>
    <scope>FUNCTION</scope>
    <scope>SUBCELLULAR LOCATION</scope>
    <scope>TISSUE SPECIFICITY</scope>
    <scope>MASS SPECTROMETRY</scope>
    <source>
        <tissue>Sperm</tissue>
    </source>
</reference>
<name>PRT32_HYDCO</name>
<accession>P83267</accession>
<feature type="chain" id="PRO_0000106628" description="Sperm protamine R3 isoform 2">
    <location>
        <begin position="1"/>
        <end position="48"/>
    </location>
</feature>
<feature type="region of interest" description="Disordered" evidence="1">
    <location>
        <begin position="1"/>
        <end position="48"/>
    </location>
</feature>
<feature type="compositionally biased region" description="Basic residues" evidence="1">
    <location>
        <begin position="1"/>
        <end position="29"/>
    </location>
</feature>
<proteinExistence type="evidence at protein level"/>
<comment type="function">
    <text evidence="2">Protamines substitute for histones in the chromatin of sperm during the haploid phase of spermatogenesis. They compact sperm DNA into a highly condensed, stable and inactive complex.</text>
</comment>
<comment type="subcellular location">
    <subcellularLocation>
        <location evidence="2">Nucleus</location>
    </subcellularLocation>
    <subcellularLocation>
        <location evidence="2">Chromosome</location>
    </subcellularLocation>
</comment>
<comment type="tissue specificity">
    <text evidence="2">Testis.</text>
</comment>
<comment type="mass spectrometry"/>
<comment type="miscellaneous">
    <text evidence="2">Two isoforms exist, a major form and a minor form. This is the minor form.</text>
</comment>
<protein>
    <recommendedName>
        <fullName>Sperm protamine R3 isoform 2</fullName>
    </recommendedName>
</protein>